<comment type="function">
    <text evidence="1 6">Subunit of the oligosaccharyl transferase (OST) complex that catalyzes the initial transfer of a defined glycan (Glc(3)Man(9)GlcNAc(2) in eukaryotes) from the lipid carrier dolichol-pyrophosphate to an asparagine residue within an Asn-X-Ser/Thr consensus motif in nascent polypeptide chains, the first step in protein N-glycosylation. N-glycosylation occurs cotranslationally and the complex associates with the Sec61 complex at the channel-forming translocon complex that mediates protein translocation across the endoplasmic reticulum (ER). All subunits are required for a maximal enzyme activity.</text>
</comment>
<comment type="pathway">
    <text evidence="18">Protein modification; protein glycosylation.</text>
</comment>
<comment type="subunit">
    <text evidence="4 5 7 8 10 12 14">Component of the oligosaccharyltransferase (OST) complex, which appears to exist in two assemblies comprising OST1, OST2, OST4, OST5, STT3, SWP1, WPB1, and either OST3 or OST6 (PubMed:15831493, PubMed:15886282, PubMed:16096345, PubMed:16297388, PubMed:29301962, PubMed:8175708, PubMed:9405463). OST assembly occurs through the formation of 3 subcomplexes. Subcomplex 1 contains OST1 and OST5, subcomplex 2 contains STT3, OST3, and OST4, and subcomplex 3 contains OST2, WBP1, and SWP1 (PubMed:29301962). Interacts with SEC61, SBH1 and SSS1 (PubMed:15831493).</text>
</comment>
<comment type="interaction">
    <interactant intactId="EBI-12658">
        <id>P33767</id>
    </interactant>
    <interactant intactId="EBI-4860">
        <id>P53622</id>
        <label>COP1</label>
    </interactant>
    <organismsDiffer>false</organismsDiffer>
    <experiments>3</experiments>
</comment>
<comment type="interaction">
    <interactant intactId="EBI-12658">
        <id>P33767</id>
    </interactant>
    <interactant intactId="EBI-12689">
        <id>Q99380</id>
        <label>OST4</label>
    </interactant>
    <organismsDiffer>false</organismsDiffer>
    <experiments>7</experiments>
</comment>
<comment type="interaction">
    <interactant intactId="EBI-12658">
        <id>P33767</id>
    </interactant>
    <interactant intactId="EBI-16410">
        <id>P52870</id>
        <label>SBH1</label>
    </interactant>
    <organismsDiffer>false</organismsDiffer>
    <experiments>2</experiments>
</comment>
<comment type="interaction">
    <interactant intactId="EBI-12658">
        <id>P33767</id>
    </interactant>
    <interactant intactId="EBI-16400">
        <id>P32915</id>
        <label>SEC61</label>
    </interactant>
    <organismsDiffer>false</organismsDiffer>
    <experiments>3</experiments>
</comment>
<comment type="interaction">
    <interactant intactId="EBI-12658">
        <id>P33767</id>
    </interactant>
    <interactant intactId="EBI-16406">
        <id>P35179</id>
        <label>SSS1</label>
    </interactant>
    <organismsDiffer>false</organismsDiffer>
    <experiments>2</experiments>
</comment>
<comment type="interaction">
    <interactant intactId="EBI-12658">
        <id>P33767</id>
    </interactant>
    <interactant intactId="EBI-18447">
        <id>P39007</id>
        <label>STT3</label>
    </interactant>
    <organismsDiffer>false</organismsDiffer>
    <experiments>3</experiments>
</comment>
<comment type="interaction">
    <interactant intactId="EBI-12658">
        <id>P33767</id>
    </interactant>
    <interactant intactId="EBI-12666">
        <id>Q02795</id>
        <label>SWP1</label>
    </interactant>
    <organismsDiffer>false</organismsDiffer>
    <experiments>4</experiments>
</comment>
<comment type="subcellular location">
    <subcellularLocation>
        <location evidence="2 9 13">Endoplasmic reticulum membrane</location>
        <topology evidence="10">Single-pass type I membrane protein</topology>
    </subcellularLocation>
</comment>
<comment type="domain">
    <text>The cytoplasmic C-terminal domain contains a functional dilysine-retrieval motif, which is involved in the retrograde Golgi-to-ER transport of the protein.</text>
</comment>
<comment type="miscellaneous">
    <text evidence="3">Present with 14900 molecules/cell in log phase SD medium.</text>
</comment>
<comment type="similarity">
    <text evidence="15">Belongs to the DDOST 48 kDa subunit family.</text>
</comment>
<accession>P33767</accession>
<accession>D3DLP5</accession>
<feature type="signal peptide" evidence="9 11">
    <location>
        <begin position="1"/>
        <end position="20"/>
    </location>
</feature>
<feature type="chain" id="PRO_0000021961" description="Dolichyl-diphosphooligosaccharide--protein glycosyltransferase subunit WBP1">
    <location>
        <begin position="21"/>
        <end position="430"/>
    </location>
</feature>
<feature type="topological domain" description="Lumenal" evidence="17">
    <location>
        <begin position="24"/>
        <end position="393"/>
    </location>
</feature>
<feature type="transmembrane region" description="Helical" evidence="10">
    <location>
        <begin position="394"/>
        <end position="414"/>
    </location>
</feature>
<feature type="topological domain" description="Cytoplasmic" evidence="16">
    <location>
        <begin position="415"/>
        <end position="430"/>
    </location>
</feature>
<feature type="glycosylation site" description="N-linked (GlcNAc...) asparagine" evidence="10">
    <location>
        <position position="60"/>
    </location>
</feature>
<feature type="glycosylation site" description="N-linked (GlcNAc...) asparagine" evidence="10">
    <location>
        <position position="332"/>
    </location>
</feature>
<feature type="strand" evidence="22">
    <location>
        <begin position="26"/>
        <end position="30"/>
    </location>
</feature>
<feature type="turn" evidence="22">
    <location>
        <begin position="32"/>
        <end position="34"/>
    </location>
</feature>
<feature type="helix" evidence="22">
    <location>
        <begin position="38"/>
        <end position="40"/>
    </location>
</feature>
<feature type="helix" evidence="22">
    <location>
        <begin position="41"/>
        <end position="49"/>
    </location>
</feature>
<feature type="strand" evidence="22">
    <location>
        <begin position="54"/>
        <end position="61"/>
    </location>
</feature>
<feature type="strand" evidence="22">
    <location>
        <begin position="69"/>
        <end position="72"/>
    </location>
</feature>
<feature type="strand" evidence="22">
    <location>
        <begin position="77"/>
        <end position="81"/>
    </location>
</feature>
<feature type="helix" evidence="22">
    <location>
        <begin position="88"/>
        <end position="93"/>
    </location>
</feature>
<feature type="helix" evidence="22">
    <location>
        <begin position="96"/>
        <end position="104"/>
    </location>
</feature>
<feature type="strand" evidence="22">
    <location>
        <begin position="108"/>
        <end position="112"/>
    </location>
</feature>
<feature type="helix" evidence="22">
    <location>
        <begin position="121"/>
        <end position="128"/>
    </location>
</feature>
<feature type="strand" evidence="22">
    <location>
        <begin position="131"/>
        <end position="133"/>
    </location>
</feature>
<feature type="strand" evidence="22">
    <location>
        <begin position="138"/>
        <end position="141"/>
    </location>
</feature>
<feature type="strand" evidence="22">
    <location>
        <begin position="148"/>
        <end position="150"/>
    </location>
</feature>
<feature type="strand" evidence="22">
    <location>
        <begin position="152"/>
        <end position="154"/>
    </location>
</feature>
<feature type="helix" evidence="22">
    <location>
        <begin position="155"/>
        <end position="157"/>
    </location>
</feature>
<feature type="turn" evidence="22">
    <location>
        <begin position="161"/>
        <end position="163"/>
    </location>
</feature>
<feature type="strand" evidence="22">
    <location>
        <begin position="171"/>
        <end position="173"/>
    </location>
</feature>
<feature type="strand" evidence="22">
    <location>
        <begin position="180"/>
        <end position="182"/>
    </location>
</feature>
<feature type="strand" evidence="22">
    <location>
        <begin position="188"/>
        <end position="193"/>
    </location>
</feature>
<feature type="strand" evidence="22">
    <location>
        <begin position="199"/>
        <end position="205"/>
    </location>
</feature>
<feature type="helix" evidence="22">
    <location>
        <begin position="212"/>
        <end position="214"/>
    </location>
</feature>
<feature type="strand" evidence="22">
    <location>
        <begin position="216"/>
        <end position="222"/>
    </location>
</feature>
<feature type="strand" evidence="22">
    <location>
        <begin position="228"/>
        <end position="233"/>
    </location>
</feature>
<feature type="strand" evidence="21">
    <location>
        <begin position="234"/>
        <end position="239"/>
    </location>
</feature>
<feature type="helix" evidence="22">
    <location>
        <begin position="240"/>
        <end position="242"/>
    </location>
</feature>
<feature type="turn" evidence="22">
    <location>
        <begin position="243"/>
        <end position="245"/>
    </location>
</feature>
<feature type="helix" evidence="22">
    <location>
        <begin position="247"/>
        <end position="256"/>
    </location>
</feature>
<feature type="turn" evidence="22">
    <location>
        <begin position="257"/>
        <end position="259"/>
    </location>
</feature>
<feature type="strand" evidence="22">
    <location>
        <begin position="260"/>
        <end position="276"/>
    </location>
</feature>
<feature type="turn" evidence="22">
    <location>
        <begin position="279"/>
        <end position="281"/>
    </location>
</feature>
<feature type="strand" evidence="20">
    <location>
        <begin position="285"/>
        <end position="287"/>
    </location>
</feature>
<feature type="strand" evidence="22">
    <location>
        <begin position="289"/>
        <end position="299"/>
    </location>
</feature>
<feature type="strand" evidence="22">
    <location>
        <begin position="304"/>
        <end position="306"/>
    </location>
</feature>
<feature type="strand" evidence="22">
    <location>
        <begin position="313"/>
        <end position="326"/>
    </location>
</feature>
<feature type="strand" evidence="22">
    <location>
        <begin position="328"/>
        <end position="332"/>
    </location>
</feature>
<feature type="strand" evidence="22">
    <location>
        <begin position="337"/>
        <end position="345"/>
    </location>
</feature>
<feature type="strand" evidence="22">
    <location>
        <begin position="351"/>
        <end position="359"/>
    </location>
</feature>
<feature type="strand" evidence="22">
    <location>
        <begin position="367"/>
        <end position="376"/>
    </location>
</feature>
<feature type="helix" evidence="22">
    <location>
        <begin position="380"/>
        <end position="382"/>
    </location>
</feature>
<feature type="helix" evidence="22">
    <location>
        <begin position="386"/>
        <end position="388"/>
    </location>
</feature>
<feature type="strand" evidence="20">
    <location>
        <begin position="389"/>
        <end position="391"/>
    </location>
</feature>
<feature type="helix" evidence="22">
    <location>
        <begin position="392"/>
        <end position="414"/>
    </location>
</feature>
<feature type="helix" evidence="19">
    <location>
        <begin position="426"/>
        <end position="429"/>
    </location>
</feature>
<sequence>MRTDWNFFFCILLQAIFVVGTQTSRTLVLYDQSTEPLEEYSVYLKDLEQRNYKLEYLDINSTSTTVDLYDKEQRLFDNIIVFPTKGGKNLARQIPVKQLIKFFENEGNILCMSSPGAVPNTIRLFLNELGIYPSPKGHVIRDYFSPSSEELVVSSNHLLNKYVYNARKSEDFVFGESSAALLENREQIVPILNAPRTSFTESKGKCNSWTSGSQGFLVVGFQNLNNARLVWIGSSDFLKNKNQDSNQEFAKELLKWTFNEKSVIKSVHAVHSHADGTSYDEEPYKIKDKVIYSVGFSEWNGEEWLPHIADDIQFELRQVDPYYRLTLSPSGNDSETQYYTTGEFILPDRHGVFTFLTDYRKIGLSFTTDKDVKAIRHLANDEYPRSWEISNSWVYISAICGVIVAWIFFVVSFVTTSSVGKKLETFKKTN</sequence>
<organism>
    <name type="scientific">Saccharomyces cerevisiae (strain ATCC 204508 / S288c)</name>
    <name type="common">Baker's yeast</name>
    <dbReference type="NCBI Taxonomy" id="559292"/>
    <lineage>
        <taxon>Eukaryota</taxon>
        <taxon>Fungi</taxon>
        <taxon>Dikarya</taxon>
        <taxon>Ascomycota</taxon>
        <taxon>Saccharomycotina</taxon>
        <taxon>Saccharomycetes</taxon>
        <taxon>Saccharomycetales</taxon>
        <taxon>Saccharomycetaceae</taxon>
        <taxon>Saccharomyces</taxon>
    </lineage>
</organism>
<proteinExistence type="evidence at protein level"/>
<dbReference type="EMBL" id="X61388">
    <property type="protein sequence ID" value="CAA43660.1"/>
    <property type="molecule type" value="Genomic_DNA"/>
</dbReference>
<dbReference type="EMBL" id="U18530">
    <property type="protein sequence ID" value="AAB64479.1"/>
    <property type="molecule type" value="Genomic_DNA"/>
</dbReference>
<dbReference type="EMBL" id="BK006939">
    <property type="protein sequence ID" value="DAA07649.1"/>
    <property type="molecule type" value="Genomic_DNA"/>
</dbReference>
<dbReference type="PIR" id="S20187">
    <property type="entry name" value="S20187"/>
</dbReference>
<dbReference type="RefSeq" id="NP_010914.3">
    <property type="nucleotide sequence ID" value="NM_001178817.3"/>
</dbReference>
<dbReference type="PDB" id="4J86">
    <property type="method" value="X-ray"/>
    <property type="resolution" value="1.48 A"/>
    <property type="chains" value="C/D=425-430"/>
</dbReference>
<dbReference type="PDB" id="6C26">
    <property type="method" value="EM"/>
    <property type="resolution" value="3.50 A"/>
    <property type="chains" value="B=1-430"/>
</dbReference>
<dbReference type="PDB" id="6EZN">
    <property type="method" value="EM"/>
    <property type="resolution" value="3.30 A"/>
    <property type="chains" value="G=1-430"/>
</dbReference>
<dbReference type="PDB" id="7OCI">
    <property type="method" value="EM"/>
    <property type="resolution" value="3.46 A"/>
    <property type="chains" value="G=1-430"/>
</dbReference>
<dbReference type="PDB" id="8AGB">
    <property type="method" value="EM"/>
    <property type="resolution" value="3.00 A"/>
    <property type="chains" value="G=1-430"/>
</dbReference>
<dbReference type="PDB" id="8AGC">
    <property type="method" value="EM"/>
    <property type="resolution" value="3.10 A"/>
    <property type="chains" value="G=1-430"/>
</dbReference>
<dbReference type="PDB" id="8AGE">
    <property type="method" value="EM"/>
    <property type="resolution" value="2.80 A"/>
    <property type="chains" value="G=1-430"/>
</dbReference>
<dbReference type="PDBsum" id="4J86"/>
<dbReference type="PDBsum" id="6C26"/>
<dbReference type="PDBsum" id="6EZN"/>
<dbReference type="PDBsum" id="7OCI"/>
<dbReference type="PDBsum" id="8AGB"/>
<dbReference type="PDBsum" id="8AGC"/>
<dbReference type="PDBsum" id="8AGE"/>
<dbReference type="EMDB" id="EMD-12808"/>
<dbReference type="EMDB" id="EMD-15419"/>
<dbReference type="EMDB" id="EMD-4161"/>
<dbReference type="EMDB" id="EMD-7336"/>
<dbReference type="SMR" id="P33767"/>
<dbReference type="BioGRID" id="36729">
    <property type="interactions" value="495"/>
</dbReference>
<dbReference type="ComplexPortal" id="CPX-1638">
    <property type="entry name" value="Oligosaccharyltransferase complex, OST6 variant"/>
</dbReference>
<dbReference type="ComplexPortal" id="CPX-1639">
    <property type="entry name" value="Oligosaccharyltransferase complex, OST3 variant"/>
</dbReference>
<dbReference type="DIP" id="DIP-676N"/>
<dbReference type="ELM" id="P33767"/>
<dbReference type="FunCoup" id="P33767">
    <property type="interactions" value="1249"/>
</dbReference>
<dbReference type="IntAct" id="P33767">
    <property type="interactions" value="65"/>
</dbReference>
<dbReference type="MINT" id="P33767"/>
<dbReference type="STRING" id="4932.YEL002C"/>
<dbReference type="TCDB" id="9.B.142.3.14">
    <property type="family name" value="the integral membrane glycosyltransferase family 39 (gt39) family"/>
</dbReference>
<dbReference type="GlyCosmos" id="P33767">
    <property type="glycosylation" value="2 sites, No reported glycans"/>
</dbReference>
<dbReference type="GlyGen" id="P33767">
    <property type="glycosylation" value="2 sites"/>
</dbReference>
<dbReference type="iPTMnet" id="P33767"/>
<dbReference type="PaxDb" id="4932-YEL002C"/>
<dbReference type="PeptideAtlas" id="P33767"/>
<dbReference type="ABCD" id="P33767">
    <property type="antibodies" value="1 sequenced antibody"/>
</dbReference>
<dbReference type="EnsemblFungi" id="YEL002C_mRNA">
    <property type="protein sequence ID" value="YEL002C"/>
    <property type="gene ID" value="YEL002C"/>
</dbReference>
<dbReference type="GeneID" id="856716"/>
<dbReference type="KEGG" id="sce:YEL002C"/>
<dbReference type="AGR" id="SGD:S000000728"/>
<dbReference type="SGD" id="S000000728">
    <property type="gene designation" value="WBP1"/>
</dbReference>
<dbReference type="VEuPathDB" id="FungiDB:YEL002C"/>
<dbReference type="eggNOG" id="KOG2754">
    <property type="taxonomic scope" value="Eukaryota"/>
</dbReference>
<dbReference type="GeneTree" id="ENSGT00390000017294"/>
<dbReference type="HOGENOM" id="CLU_031804_1_1_1"/>
<dbReference type="InParanoid" id="P33767"/>
<dbReference type="OMA" id="AHDEYPR"/>
<dbReference type="OrthoDB" id="29105at2759"/>
<dbReference type="BioCyc" id="MetaCyc:YEL002C-MONOMER"/>
<dbReference type="BioCyc" id="YEAST:YEL002C-MONOMER"/>
<dbReference type="BRENDA" id="2.4.99.18">
    <property type="organism ID" value="984"/>
</dbReference>
<dbReference type="Reactome" id="R-SCE-6798695">
    <property type="pathway name" value="Neutrophil degranulation"/>
</dbReference>
<dbReference type="UniPathway" id="UPA00378"/>
<dbReference type="BioGRID-ORCS" id="856716">
    <property type="hits" value="1 hit in 10 CRISPR screens"/>
</dbReference>
<dbReference type="EvolutionaryTrace" id="P33767"/>
<dbReference type="PRO" id="PR:P33767"/>
<dbReference type="Proteomes" id="UP000002311">
    <property type="component" value="Chromosome V"/>
</dbReference>
<dbReference type="RNAct" id="P33767">
    <property type="molecule type" value="protein"/>
</dbReference>
<dbReference type="GO" id="GO:0005783">
    <property type="term" value="C:endoplasmic reticulum"/>
    <property type="evidence" value="ECO:0000314"/>
    <property type="project" value="SGD"/>
</dbReference>
<dbReference type="GO" id="GO:0005789">
    <property type="term" value="C:endoplasmic reticulum membrane"/>
    <property type="evidence" value="ECO:0000315"/>
    <property type="project" value="SGD"/>
</dbReference>
<dbReference type="GO" id="GO:0005635">
    <property type="term" value="C:nuclear envelope"/>
    <property type="evidence" value="ECO:0000314"/>
    <property type="project" value="SGD"/>
</dbReference>
<dbReference type="GO" id="GO:0008250">
    <property type="term" value="C:oligosaccharyltransferase complex"/>
    <property type="evidence" value="ECO:0000314"/>
    <property type="project" value="SGD"/>
</dbReference>
<dbReference type="GO" id="GO:0016757">
    <property type="term" value="F:glycosyltransferase activity"/>
    <property type="evidence" value="ECO:0000314"/>
    <property type="project" value="SGD"/>
</dbReference>
<dbReference type="GO" id="GO:0006487">
    <property type="term" value="P:protein N-linked glycosylation"/>
    <property type="evidence" value="ECO:0000353"/>
    <property type="project" value="SGD"/>
</dbReference>
<dbReference type="GO" id="GO:0018279">
    <property type="term" value="P:protein N-linked glycosylation via asparagine"/>
    <property type="evidence" value="ECO:0000318"/>
    <property type="project" value="GO_Central"/>
</dbReference>
<dbReference type="InterPro" id="IPR005013">
    <property type="entry name" value="DDOST_48_kDa_subunit"/>
</dbReference>
<dbReference type="InterPro" id="IPR055459">
    <property type="entry name" value="OST48_MD"/>
</dbReference>
<dbReference type="InterPro" id="IPR055457">
    <property type="entry name" value="OST48_N"/>
</dbReference>
<dbReference type="PANTHER" id="PTHR10830">
    <property type="entry name" value="DOLICHYL-DIPHOSPHOOLIGOSACCHARIDE--PROTEIN GLYCOSYLTRANSFERASE 48 KDA SUBUNIT"/>
    <property type="match status" value="1"/>
</dbReference>
<dbReference type="PANTHER" id="PTHR10830:SF0">
    <property type="entry name" value="DOLICHYL-DIPHOSPHOOLIGOSACCHARIDE--PROTEIN GLYCOSYLTRANSFERASE 48 KDA SUBUNIT"/>
    <property type="match status" value="1"/>
</dbReference>
<dbReference type="Pfam" id="PF23358">
    <property type="entry name" value="OST48_MD"/>
    <property type="match status" value="1"/>
</dbReference>
<dbReference type="Pfam" id="PF03345">
    <property type="entry name" value="OST48_N"/>
    <property type="match status" value="1"/>
</dbReference>
<gene>
    <name type="primary">WBP1</name>
    <name type="ordered locus">YEL002C</name>
</gene>
<protein>
    <recommendedName>
        <fullName>Dolichyl-diphosphooligosaccharide--protein glycosyltransferase subunit WBP1</fullName>
        <shortName>Oligosaccharyl transferase subunit WBP1</shortName>
    </recommendedName>
    <alternativeName>
        <fullName>Oligosaccharyl transferase subunit beta</fullName>
    </alternativeName>
</protein>
<name>OSTB_YEAST</name>
<evidence type="ECO:0000269" key="1">
    <source>
    </source>
</evidence>
<evidence type="ECO:0000269" key="2">
    <source>
    </source>
</evidence>
<evidence type="ECO:0000269" key="3">
    <source>
    </source>
</evidence>
<evidence type="ECO:0000269" key="4">
    <source>
    </source>
</evidence>
<evidence type="ECO:0000269" key="5">
    <source>
    </source>
</evidence>
<evidence type="ECO:0000269" key="6">
    <source>
    </source>
</evidence>
<evidence type="ECO:0000269" key="7">
    <source>
    </source>
</evidence>
<evidence type="ECO:0000269" key="8">
    <source>
    </source>
</evidence>
<evidence type="ECO:0000269" key="9">
    <source>
    </source>
</evidence>
<evidence type="ECO:0000269" key="10">
    <source>
    </source>
</evidence>
<evidence type="ECO:0000269" key="11">
    <source>
    </source>
</evidence>
<evidence type="ECO:0000269" key="12">
    <source>
    </source>
</evidence>
<evidence type="ECO:0000269" key="13">
    <source>
    </source>
</evidence>
<evidence type="ECO:0000269" key="14">
    <source>
    </source>
</evidence>
<evidence type="ECO:0000305" key="15"/>
<evidence type="ECO:0000305" key="16">
    <source>
    </source>
</evidence>
<evidence type="ECO:0000305" key="17">
    <source>
    </source>
</evidence>
<evidence type="ECO:0000305" key="18">
    <source>
    </source>
</evidence>
<evidence type="ECO:0007829" key="19">
    <source>
        <dbReference type="PDB" id="4J86"/>
    </source>
</evidence>
<evidence type="ECO:0007829" key="20">
    <source>
        <dbReference type="PDB" id="6EZN"/>
    </source>
</evidence>
<evidence type="ECO:0007829" key="21">
    <source>
        <dbReference type="PDB" id="8AGC"/>
    </source>
</evidence>
<evidence type="ECO:0007829" key="22">
    <source>
        <dbReference type="PDB" id="8AGE"/>
    </source>
</evidence>
<keyword id="KW-0002">3D-structure</keyword>
<keyword id="KW-0903">Direct protein sequencing</keyword>
<keyword id="KW-0256">Endoplasmic reticulum</keyword>
<keyword id="KW-0325">Glycoprotein</keyword>
<keyword id="KW-0472">Membrane</keyword>
<keyword id="KW-1185">Reference proteome</keyword>
<keyword id="KW-0732">Signal</keyword>
<keyword id="KW-0812">Transmembrane</keyword>
<keyword id="KW-1133">Transmembrane helix</keyword>
<reference key="1">
    <citation type="journal article" date="1991" name="Eur. J. Cell Biol.">
        <title>An essential 45 kDa yeast transmembrane protein reacts with anti-nuclear pore antibodies: purification of the protein, immunolocalization and cloning of the gene.</title>
        <authorList>
            <person name="Te Heesen S."/>
            <person name="Rauhut R."/>
            <person name="Aebersold R."/>
            <person name="Abelson J."/>
            <person name="Aebi M."/>
            <person name="Clark M.W."/>
        </authorList>
    </citation>
    <scope>NUCLEOTIDE SEQUENCE [GENOMIC DNA]</scope>
    <scope>PROTEIN SEQUENCE OF N-TERMINUS</scope>
    <scope>SUBCELLULAR LOCATION</scope>
    <scope>TOPOLOGY</scope>
</reference>
<reference key="2">
    <citation type="journal article" date="1997" name="Nature">
        <title>The nucleotide sequence of Saccharomyces cerevisiae chromosome V.</title>
        <authorList>
            <person name="Dietrich F.S."/>
            <person name="Mulligan J.T."/>
            <person name="Hennessy K.M."/>
            <person name="Yelton M.A."/>
            <person name="Allen E."/>
            <person name="Araujo R."/>
            <person name="Aviles E."/>
            <person name="Berno A."/>
            <person name="Brennan T."/>
            <person name="Carpenter J."/>
            <person name="Chen E."/>
            <person name="Cherry J.M."/>
            <person name="Chung E."/>
            <person name="Duncan M."/>
            <person name="Guzman E."/>
            <person name="Hartzell G."/>
            <person name="Hunicke-Smith S."/>
            <person name="Hyman R.W."/>
            <person name="Kayser A."/>
            <person name="Komp C."/>
            <person name="Lashkari D."/>
            <person name="Lew H."/>
            <person name="Lin D."/>
            <person name="Mosedale D."/>
            <person name="Nakahara K."/>
            <person name="Namath A."/>
            <person name="Norgren R."/>
            <person name="Oefner P."/>
            <person name="Oh C."/>
            <person name="Petel F.X."/>
            <person name="Roberts D."/>
            <person name="Sehl P."/>
            <person name="Schramm S."/>
            <person name="Shogren T."/>
            <person name="Smith V."/>
            <person name="Taylor P."/>
            <person name="Wei Y."/>
            <person name="Botstein D."/>
            <person name="Davis R.W."/>
        </authorList>
    </citation>
    <scope>NUCLEOTIDE SEQUENCE [LARGE SCALE GENOMIC DNA]</scope>
    <source>
        <strain>ATCC 204508 / S288c</strain>
    </source>
</reference>
<reference key="3">
    <citation type="journal article" date="2014" name="G3 (Bethesda)">
        <title>The reference genome sequence of Saccharomyces cerevisiae: Then and now.</title>
        <authorList>
            <person name="Engel S.R."/>
            <person name="Dietrich F.S."/>
            <person name="Fisk D.G."/>
            <person name="Binkley G."/>
            <person name="Balakrishnan R."/>
            <person name="Costanzo M.C."/>
            <person name="Dwight S.S."/>
            <person name="Hitz B.C."/>
            <person name="Karra K."/>
            <person name="Nash R.S."/>
            <person name="Weng S."/>
            <person name="Wong E.D."/>
            <person name="Lloyd P."/>
            <person name="Skrzypek M.S."/>
            <person name="Miyasato S.R."/>
            <person name="Simison M."/>
            <person name="Cherry J.M."/>
        </authorList>
    </citation>
    <scope>GENOME REANNOTATION</scope>
    <source>
        <strain>ATCC 204508 / S288c</strain>
    </source>
</reference>
<reference key="4">
    <citation type="journal article" date="1995" name="Biochemistry">
        <title>Sulfhydryl modification of the yeast Wbp1p inhibits oligosaccharyl transferase activity.</title>
        <authorList>
            <person name="Pathak R."/>
            <person name="Hendrickson T.L."/>
            <person name="Imperiali B."/>
        </authorList>
    </citation>
    <scope>PROTEIN SEQUENCE OF 21-40</scope>
</reference>
<reference key="5">
    <citation type="journal article" date="1992" name="EMBO J.">
        <title>The yeast WBP1 is essential for oligosaccharyl transferase activity in vivo and in vitro.</title>
        <authorList>
            <person name="Te Heesen S."/>
            <person name="Janetzky B."/>
            <person name="Lehle L."/>
            <person name="Aebi M."/>
        </authorList>
    </citation>
    <scope>CHARACTERIZATION</scope>
</reference>
<reference key="6">
    <citation type="journal article" date="1994" name="FEBS Lett.">
        <title>The N-oligosaccharyltransferase complex from yeast.</title>
        <authorList>
            <person name="Knauer R."/>
            <person name="Lehle L."/>
        </authorList>
    </citation>
    <scope>SUBCELLULAR LOCATION</scope>
</reference>
<reference key="7">
    <citation type="journal article" date="1994" name="J. Biol. Chem.">
        <title>The Saccharomyces cerevisiae oligosaccharyltransferase is a protein complex composed of Wbp1p, Swp1p, and four additional polypeptides.</title>
        <authorList>
            <person name="Kelleher D.J."/>
            <person name="Gilmore R."/>
        </authorList>
    </citation>
    <scope>IDENTIFICATION IN THE OLIGOSACCHARYL TRANSFERASE COMPLEX</scope>
</reference>
<reference key="8">
    <citation type="journal article" date="1997" name="J. Biol. Chem.">
        <title>The highly conserved Stt3 protein is a subunit of the yeast oligosaccharyltransferase and forms a subcomplex with Ost3p and Ost4p.</title>
        <authorList>
            <person name="Karaoglu D."/>
            <person name="Kelleher D.J."/>
            <person name="Gilmore R."/>
        </authorList>
    </citation>
    <scope>IDENTIFICATION IN THE OLIGOSACCHARYL TRANSFERASE COMPLEX</scope>
</reference>
<reference key="9">
    <citation type="journal article" date="1999" name="Biochim. Biophys. Acta">
        <title>The oligosaccharyltransferase complex from yeast.</title>
        <authorList>
            <person name="Knauer R."/>
            <person name="Lehle L."/>
        </authorList>
    </citation>
    <scope>REVIEW ON OLIGOSACCHARYL TRANSFERASE</scope>
</reference>
<reference key="10">
    <citation type="journal article" date="2001" name="Biochemistry">
        <title>Allosteric regulation provides a molecular mechanism for preferential utilization of the fully assembled dolichol-linked oligosaccharide by the yeast oligosaccharyltransferase.</title>
        <authorList>
            <person name="Karaoglu D."/>
            <person name="Kelleher D.J."/>
            <person name="Gilmore R."/>
        </authorList>
    </citation>
    <scope>FUNCTION</scope>
</reference>
<reference key="11">
    <citation type="journal article" date="2003" name="Nature">
        <title>Global analysis of protein localization in budding yeast.</title>
        <authorList>
            <person name="Huh W.-K."/>
            <person name="Falvo J.V."/>
            <person name="Gerke L.C."/>
            <person name="Carroll A.S."/>
            <person name="Howson R.W."/>
            <person name="Weissman J.S."/>
            <person name="O'Shea E.K."/>
        </authorList>
    </citation>
    <scope>SUBCELLULAR LOCATION [LARGE SCALE ANALYSIS]</scope>
</reference>
<reference key="12">
    <citation type="journal article" date="2003" name="Nature">
        <title>Global analysis of protein expression in yeast.</title>
        <authorList>
            <person name="Ghaemmaghami S."/>
            <person name="Huh W.-K."/>
            <person name="Bower K."/>
            <person name="Howson R.W."/>
            <person name="Belle A."/>
            <person name="Dephoure N."/>
            <person name="O'Shea E.K."/>
            <person name="Weissman J.S."/>
        </authorList>
    </citation>
    <scope>LEVEL OF PROTEIN EXPRESSION [LARGE SCALE ANALYSIS]</scope>
</reference>
<reference key="13">
    <citation type="journal article" date="2005" name="FEBS Lett.">
        <title>Yeast oligosaccharyltransferase consists of two functionally distinct sub-complexes, specified by either the Ost3p or Ost6p subunit.</title>
        <authorList>
            <person name="Schwarz M."/>
            <person name="Knauer R."/>
            <person name="Lehle L."/>
        </authorList>
    </citation>
    <scope>COMPOSITION OF OLIGOSACCHARYL TRANSFERASE COMPLEXES</scope>
</reference>
<reference key="14">
    <citation type="journal article" date="2005" name="Glycobiology">
        <title>The 3.4-kDa Ost4 protein is required for the assembly of two distinct oligosaccharyltransferase complexes in yeast.</title>
        <authorList>
            <person name="Spirig U."/>
            <person name="Bodmer D."/>
            <person name="Wacker M."/>
            <person name="Burda P."/>
            <person name="Aebi M."/>
        </authorList>
    </citation>
    <scope>COMPOSITION OF OLIGOSACCHARYL TRANSFERASE COMPLEXES</scope>
</reference>
<reference key="15">
    <citation type="journal article" date="2005" name="Glycobiology">
        <title>Two oligosaccharyl transferase complexes exist in yeast and associate with two different translocons.</title>
        <authorList>
            <person name="Yan A."/>
            <person name="Lennarz W.J."/>
        </authorList>
    </citation>
    <scope>COMPOSITION OF OLIGOSACCHARYL TRANSFERASE COMPLEXES</scope>
</reference>
<reference key="16">
    <citation type="journal article" date="2005" name="J. Biol. Chem.">
        <title>Subunits of the translocon interact with components of the oligosaccharyl transferase complex.</title>
        <authorList>
            <person name="Chavan M."/>
            <person name="Yan A."/>
            <person name="Lennarz W.J."/>
        </authorList>
    </citation>
    <scope>INTERACTION WITH SEC61; SBH1 AND SSS1</scope>
</reference>
<reference key="17">
    <citation type="journal article" date="2005" name="Proc. Natl. Acad. Sci. U.S.A.">
        <title>Studies of yeast oligosaccharyl transferase subunits using the split-ubiquitin system: topological features and in vivo interactions.</title>
        <authorList>
            <person name="Yan A."/>
            <person name="Wu E."/>
            <person name="Lennarz W.J."/>
        </authorList>
    </citation>
    <scope>INTERACTION WITH OST2; OST3; OST5; OST6; WBP1 AND SWP1</scope>
</reference>
<reference key="18">
    <citation type="journal article" date="2013" name="EMBO J.">
        <title>Rules for the recognition of dilysine retrieval motifs by coatomer.</title>
        <authorList>
            <person name="Ma W."/>
            <person name="Goldberg J."/>
        </authorList>
    </citation>
    <scope>X-RAY CRYSTALLOGRAPHY (1.48 ANGSTROMS) OF 425-430</scope>
</reference>
<reference key="19">
    <citation type="journal article" date="2018" name="Nature">
        <title>The atomic structure of a eukaryotic oligosaccharyltransferase complex.</title>
        <authorList>
            <person name="Bai L."/>
            <person name="Wang T."/>
            <person name="Zhao G."/>
            <person name="Kovach A."/>
            <person name="Li H."/>
        </authorList>
    </citation>
    <scope>STRUCTURE BY ELECTRON MICROSCOPY (3.50 ANGSTROMS) OF 1-430</scope>
</reference>
<reference key="20">
    <citation type="journal article" date="2018" name="Science">
        <title>Structure of the yeast oligosaccharyltransferase complex gives insight into eukaryotic N-glycosylation.</title>
        <authorList>
            <person name="Wild R."/>
            <person name="Kowal J."/>
            <person name="Eyring J."/>
            <person name="Ngwa E.M."/>
            <person name="Aebi M."/>
            <person name="Locher K.P."/>
        </authorList>
    </citation>
    <scope>STRUCTURE BY ELECTRON MICROSCOPY (3.30 ANGSTROMS) OF 1-430</scope>
    <scope>GLYCOSYLATION AT ASN-60 AND ASN-332</scope>
</reference>